<dbReference type="EMBL" id="BC134719">
    <property type="protein sequence ID" value="AAI34720.1"/>
    <property type="molecule type" value="mRNA"/>
</dbReference>
<dbReference type="RefSeq" id="NP_001077268.1">
    <property type="nucleotide sequence ID" value="NM_001083799.2"/>
</dbReference>
<dbReference type="FunCoup" id="A4IFR0">
    <property type="interactions" value="39"/>
</dbReference>
<dbReference type="STRING" id="9913.ENSBTAP00000024820"/>
<dbReference type="PaxDb" id="9913-ENSBTAP00000024820"/>
<dbReference type="Ensembl" id="ENSBTAT00000024820.6">
    <property type="protein sequence ID" value="ENSBTAP00000024820.4"/>
    <property type="gene ID" value="ENSBTAG00000018652.6"/>
</dbReference>
<dbReference type="GeneID" id="788717"/>
<dbReference type="KEGG" id="bta:788717"/>
<dbReference type="CTD" id="284340"/>
<dbReference type="VEuPathDB" id="HostDB:ENSBTAG00000018652"/>
<dbReference type="VGNC" id="VGNC:27852">
    <property type="gene designation" value="CXCL17"/>
</dbReference>
<dbReference type="eggNOG" id="ENOG502TDC2">
    <property type="taxonomic scope" value="Eukaryota"/>
</dbReference>
<dbReference type="GeneTree" id="ENSGT00390000002861"/>
<dbReference type="HOGENOM" id="CLU_166962_0_0_1"/>
<dbReference type="InParanoid" id="A4IFR0"/>
<dbReference type="OMA" id="CPCDHLK"/>
<dbReference type="OrthoDB" id="9833421at2759"/>
<dbReference type="TreeFam" id="TF342477"/>
<dbReference type="Proteomes" id="UP000009136">
    <property type="component" value="Chromosome 18"/>
</dbReference>
<dbReference type="Bgee" id="ENSBTAG00000018652">
    <property type="expression patterns" value="Expressed in abomasum and 59 other cell types or tissues"/>
</dbReference>
<dbReference type="GO" id="GO:0005615">
    <property type="term" value="C:extracellular space"/>
    <property type="evidence" value="ECO:0000250"/>
    <property type="project" value="UniProtKB"/>
</dbReference>
<dbReference type="GO" id="GO:0001525">
    <property type="term" value="P:angiogenesis"/>
    <property type="evidence" value="ECO:0007669"/>
    <property type="project" value="UniProtKB-KW"/>
</dbReference>
<dbReference type="GO" id="GO:0030154">
    <property type="term" value="P:cell differentiation"/>
    <property type="evidence" value="ECO:0007669"/>
    <property type="project" value="UniProtKB-KW"/>
</dbReference>
<dbReference type="GO" id="GO:0048246">
    <property type="term" value="P:macrophage chemotaxis"/>
    <property type="evidence" value="ECO:0000318"/>
    <property type="project" value="GO_Central"/>
</dbReference>
<dbReference type="GO" id="GO:0050728">
    <property type="term" value="P:negative regulation of inflammatory response"/>
    <property type="evidence" value="ECO:0000250"/>
    <property type="project" value="UniProtKB"/>
</dbReference>
<dbReference type="GO" id="GO:0070374">
    <property type="term" value="P:positive regulation of ERK1 and ERK2 cascade"/>
    <property type="evidence" value="ECO:0000250"/>
    <property type="project" value="UniProtKB"/>
</dbReference>
<dbReference type="GO" id="GO:0010759">
    <property type="term" value="P:positive regulation of macrophage chemotaxis"/>
    <property type="evidence" value="ECO:0000250"/>
    <property type="project" value="UniProtKB"/>
</dbReference>
<dbReference type="GO" id="GO:0090026">
    <property type="term" value="P:positive regulation of monocyte chemotaxis"/>
    <property type="evidence" value="ECO:0000250"/>
    <property type="project" value="UniProtKB"/>
</dbReference>
<dbReference type="GO" id="GO:0010575">
    <property type="term" value="P:positive regulation of vascular endothelial growth factor production"/>
    <property type="evidence" value="ECO:0000250"/>
    <property type="project" value="UniProtKB"/>
</dbReference>
<dbReference type="InterPro" id="IPR029183">
    <property type="entry name" value="CXCL17"/>
</dbReference>
<dbReference type="PANTHER" id="PTHR37351">
    <property type="entry name" value="C-X-C MOTIF CHEMOKINE 17"/>
    <property type="match status" value="1"/>
</dbReference>
<dbReference type="PANTHER" id="PTHR37351:SF1">
    <property type="entry name" value="C-X-C MOTIF CHEMOKINE 17"/>
    <property type="match status" value="1"/>
</dbReference>
<dbReference type="Pfam" id="PF15211">
    <property type="entry name" value="CXCL17"/>
    <property type="match status" value="1"/>
</dbReference>
<accession>A4IFR0</accession>
<evidence type="ECO:0000250" key="1">
    <source>
        <dbReference type="UniProtKB" id="Q6UXB2"/>
    </source>
</evidence>
<evidence type="ECO:0000255" key="2"/>
<evidence type="ECO:0000305" key="3"/>
<sequence>MKVLISSLLLLLPLMLMSVVSSSSHTGVARGQRDQRQASGRWLREGGQECECQDWFLRAPRRTLMAAPRLTKPCPCDHFKGRMKKTRHQRHHRKSNKPSRACQQFLTRCLLESFALPL</sequence>
<feature type="signal peptide" evidence="2">
    <location>
        <begin position="1"/>
        <end position="22"/>
    </location>
</feature>
<feature type="chain" id="PRO_0000311096" description="C-X-C motif chemokine 17">
    <location>
        <begin position="23"/>
        <end position="118"/>
    </location>
</feature>
<feature type="disulfide bond" evidence="3">
    <location>
        <begin position="74"/>
        <end position="102"/>
    </location>
</feature>
<feature type="disulfide bond" evidence="3">
    <location>
        <begin position="76"/>
        <end position="109"/>
    </location>
</feature>
<organism>
    <name type="scientific">Bos taurus</name>
    <name type="common">Bovine</name>
    <dbReference type="NCBI Taxonomy" id="9913"/>
    <lineage>
        <taxon>Eukaryota</taxon>
        <taxon>Metazoa</taxon>
        <taxon>Chordata</taxon>
        <taxon>Craniata</taxon>
        <taxon>Vertebrata</taxon>
        <taxon>Euteleostomi</taxon>
        <taxon>Mammalia</taxon>
        <taxon>Eutheria</taxon>
        <taxon>Laurasiatheria</taxon>
        <taxon>Artiodactyla</taxon>
        <taxon>Ruminantia</taxon>
        <taxon>Pecora</taxon>
        <taxon>Bovidae</taxon>
        <taxon>Bovinae</taxon>
        <taxon>Bos</taxon>
    </lineage>
</organism>
<protein>
    <recommendedName>
        <fullName>C-X-C motif chemokine 17</fullName>
    </recommendedName>
    <alternativeName>
        <fullName>VEGF coregulated chemokine 1</fullName>
    </alternativeName>
</protein>
<comment type="function">
    <text evidence="1">Chemokine that acts as a chemoattractant for monocytes, macrophages and dendritic cells. Plays a role in angiogenesis and possibly in the development of tumors. Acts as an anti-inflammatory in the stomach. May play a role in the innate defense against infections. Activates the C-X-C chemokine receptor GPR35 to induce a rapid and transient rise in the level of intracellular calcium ions.</text>
</comment>
<comment type="subcellular location">
    <subcellularLocation>
        <location evidence="1">Secreted</location>
    </subcellularLocation>
</comment>
<comment type="similarity">
    <text evidence="3">Belongs to the intercrine alpha (chemokine CxC) family.</text>
</comment>
<gene>
    <name type="primary">CXCL17</name>
    <name type="synonym">VCC1</name>
</gene>
<keyword id="KW-0037">Angiogenesis</keyword>
<keyword id="KW-0145">Chemotaxis</keyword>
<keyword id="KW-0217">Developmental protein</keyword>
<keyword id="KW-0221">Differentiation</keyword>
<keyword id="KW-1015">Disulfide bond</keyword>
<keyword id="KW-1185">Reference proteome</keyword>
<keyword id="KW-0964">Secreted</keyword>
<keyword id="KW-0732">Signal</keyword>
<reference key="1">
    <citation type="submission" date="2007-03" db="EMBL/GenBank/DDBJ databases">
        <authorList>
            <consortium name="NIH - Mammalian Gene Collection (MGC) project"/>
        </authorList>
    </citation>
    <scope>NUCLEOTIDE SEQUENCE [LARGE SCALE MRNA]</scope>
    <source>
        <strain>Hereford</strain>
        <tissue>Fetal lung</tissue>
    </source>
</reference>
<name>CXL17_BOVIN</name>
<proteinExistence type="inferred from homology"/>